<comment type="function">
    <text evidence="6 8">3-keto-steroid reductase; part of the third module of ergosterol biosynthesis pathway that includes the late steps of the pathway (PubMed:15552648). ERG27 is a catalytic component of the C-4 demethylation complex that catalyzes the reduction of the keto group on the C-3 (PubMed:15552648). The third module or late pathway involves the ergosterol synthesis itself through consecutive reactions that mainly occur in the endoplasmic reticulum (ER) membrane. Firstly, the squalene synthase ERG9 catalyzes the condensation of 2 farnesyl pyrophosphate moieties to form squalene, which is the precursor of all steroids. Squalene synthase is crucial for balancing the incorporation of farnesyl diphosphate (FPP) into sterol and nonsterol isoprene synthesis. Secondly, the squalene epoxidase ERG1 catalyzes the stereospecific oxidation of squalene to (S)-2,3-epoxysqualene, which is considered to be a rate-limiting enzyme in steroid biosynthesis. Then, the lanosterol synthase ERG7 catalyzes the cyclization of (S)-2,3 oxidosqualene to lanosterol, a reaction that forms the sterol core. In the next steps, lanosterol is transformed to zymosterol through a complex process involving various demethylation, reduction and desaturation reactions. The lanosterol 14-alpha-demethylase ERG11 (also known as CYP51) catalyzes C14-demethylation of lanosterol to produce 4,4'-dimethyl cholesta-8,14,24-triene-3-beta-ol, which is critical for ergosterol biosynthesis. The C-14 reductase ERG24 reduces the C14=C15 double bond of 4,4-dimethyl-cholesta-8,14,24-trienol to produce 4,4-dimethyl-cholesta-8,24-dienol. 4,4-dimethyl-cholesta-8,24-dienol is substrate of the C-4 demethylation complex ERG25-ERG26-ERG27 in which ERG25 catalyzes the three-step monooxygenation required for the demethylation of 4,4-dimethyl and 4alpha-methylsterols, ERG26 catalyzes the oxidative decarboxylation that results in a reduction of the 3-beta-hydroxy group at the C-3 carbon to an oxo group, and ERG27 is responsible for the reduction of the keto group on the C-3. ERG28 has a role as a scaffold to help anchor ERG25, ERG26 and ERG27 to the endoplasmic reticulum and ERG29 regulates the activity of the iron-containing C4-methylsterol oxidase ERG25. Then, the sterol 24-C-methyltransferase ERG6 catalyzes the methyl transfer from S-adenosyl-methionine to the C-24 of zymosterol to form fecosterol. The C-8 sterol isomerase ERG2 catalyzes the reaction which results in unsaturation at C-7 in the B ring of sterols and thus converts fecosterol to episterol. The sterol-C5-desaturase ERG3 then catalyzes the introduction of a C-5 double bond in the B ring to produce 5-dehydroepisterol. The C-22 sterol desaturase ERG5 further converts 5-dehydroepisterol into ergosta-5,7,22,24(28)-tetraen-3beta-ol by forming the C-22(23) double bond in the sterol side chain. Finally, ergosta-5,7,22,24(28)-tetraen-3beta-ol is substrate of the C-24(28) sterol reductase ERG4 to produce ergosterol (Probable).</text>
</comment>
<comment type="function">
    <text evidence="3">Facilitates the association of ERG7 with lipid particles preventing its digestion in the endoplasmic reticulum and the lipid particles.</text>
</comment>
<comment type="catalytic activity">
    <reaction evidence="6">
        <text>3-dehydro-4alpha-methylzymosterol + NADPH + H(+) = 4alpha-methylzymosterol + NADP(+)</text>
        <dbReference type="Rhea" id="RHEA:36379"/>
        <dbReference type="ChEBI" id="CHEBI:1949"/>
        <dbReference type="ChEBI" id="CHEBI:15378"/>
        <dbReference type="ChEBI" id="CHEBI:57783"/>
        <dbReference type="ChEBI" id="CHEBI:58349"/>
        <dbReference type="ChEBI" id="CHEBI:136486"/>
        <dbReference type="EC" id="1.1.1.270"/>
    </reaction>
    <physiologicalReaction direction="left-to-right" evidence="6">
        <dbReference type="Rhea" id="RHEA:36380"/>
    </physiologicalReaction>
</comment>
<comment type="pathway">
    <text evidence="6">Steroid biosynthesis; zymosterol biosynthesis; zymosterol from lanosterol: step 5/6.</text>
</comment>
<comment type="subunit">
    <text evidence="3">Heterotetramer of ERG25, ERG26, ERG27 and ERG28 (By similarity). ERG28 acts as a scaffold to tether ERG27 and other 4,4-demethylation-related enzymes, forming a demethylation enzyme complex, in the endoplasmic reticulum. Interacts with ERG25 and ERG28. Also interacts with ERG7, but only in lipid particles (By similarity).</text>
</comment>
<comment type="subcellular location">
    <subcellularLocation>
        <location evidence="3">Endoplasmic reticulum membrane</location>
        <topology evidence="4">Single-pass membrane protein</topology>
    </subcellularLocation>
    <subcellularLocation>
        <location evidence="3">Lipid droplet</location>
    </subcellularLocation>
</comment>
<comment type="induction">
    <text evidence="6">Expression is increased by itraconazole (which targets the lanosterol demethylase CYP51/ERG11) and by zaragozic acid A (which targets the squalene synthase ERG9).</text>
</comment>
<comment type="disruption phenotype">
    <text evidence="6">Leads to complete loss of both 3-keto reductase and oxidosqualene cyclase (performed by ERG7) activities, compromising all sterol synthesis.</text>
</comment>
<comment type="similarity">
    <text evidence="8">Belongs to the short-chain dehydrogenases/reductases (SDR) family. ERG27 subfamily.</text>
</comment>
<feature type="chain" id="PRO_0000454176" description="3-keto-steroid reductase ERG27">
    <location>
        <begin position="1"/>
        <end position="346"/>
    </location>
</feature>
<feature type="transmembrane region" description="Helical" evidence="4">
    <location>
        <begin position="242"/>
        <end position="262"/>
    </location>
</feature>
<feature type="active site" description="Proton donor" evidence="2">
    <location>
        <position position="182"/>
    </location>
</feature>
<feature type="active site" description="Proton donor" evidence="2">
    <location>
        <position position="205"/>
    </location>
</feature>
<feature type="active site" description="Lowers pKa of active site Tyr" evidence="2">
    <location>
        <position position="209"/>
    </location>
</feature>
<feature type="binding site" evidence="1">
    <location>
        <position position="19"/>
    </location>
    <ligand>
        <name>NADP(+)</name>
        <dbReference type="ChEBI" id="CHEBI:58349"/>
    </ligand>
</feature>
<feature type="binding site" evidence="1">
    <location>
        <position position="42"/>
    </location>
    <ligand>
        <name>NADP(+)</name>
        <dbReference type="ChEBI" id="CHEBI:58349"/>
    </ligand>
</feature>
<feature type="binding site" evidence="1">
    <location>
        <position position="48"/>
    </location>
    <ligand>
        <name>NADP(+)</name>
        <dbReference type="ChEBI" id="CHEBI:58349"/>
    </ligand>
</feature>
<feature type="binding site" evidence="2">
    <location>
        <position position="205"/>
    </location>
    <ligand>
        <name>NADP(+)</name>
        <dbReference type="ChEBI" id="CHEBI:58349"/>
    </ligand>
</feature>
<feature type="binding site" evidence="2">
    <location>
        <position position="209"/>
    </location>
    <ligand>
        <name>NADP(+)</name>
        <dbReference type="ChEBI" id="CHEBI:58349"/>
    </ligand>
</feature>
<feature type="binding site" evidence="1">
    <location>
        <position position="241"/>
    </location>
    <ligand>
        <name>NADP(+)</name>
        <dbReference type="ChEBI" id="CHEBI:58349"/>
    </ligand>
</feature>
<feature type="glycosylation site" description="N-linked (GlcNAc...) asparagine" evidence="5">
    <location>
        <position position="272"/>
    </location>
</feature>
<name>ERG27_CANAL</name>
<reference key="1">
    <citation type="journal article" date="2004" name="Proc. Natl. Acad. Sci. U.S.A.">
        <title>The diploid genome sequence of Candida albicans.</title>
        <authorList>
            <person name="Jones T."/>
            <person name="Federspiel N.A."/>
            <person name="Chibana H."/>
            <person name="Dungan J."/>
            <person name="Kalman S."/>
            <person name="Magee B.B."/>
            <person name="Newport G."/>
            <person name="Thorstenson Y.R."/>
            <person name="Agabian N."/>
            <person name="Magee P.T."/>
            <person name="Davis R.W."/>
            <person name="Scherer S."/>
        </authorList>
    </citation>
    <scope>NUCLEOTIDE SEQUENCE [LARGE SCALE GENOMIC DNA]</scope>
    <source>
        <strain>SC5314 / ATCC MYA-2876</strain>
    </source>
</reference>
<reference key="2">
    <citation type="journal article" date="2007" name="Genome Biol.">
        <title>Assembly of the Candida albicans genome into sixteen supercontigs aligned on the eight chromosomes.</title>
        <authorList>
            <person name="van het Hoog M."/>
            <person name="Rast T.J."/>
            <person name="Martchenko M."/>
            <person name="Grindle S."/>
            <person name="Dignard D."/>
            <person name="Hogues H."/>
            <person name="Cuomo C."/>
            <person name="Berriman M."/>
            <person name="Scherer S."/>
            <person name="Magee B.B."/>
            <person name="Whiteway M."/>
            <person name="Chibana H."/>
            <person name="Nantel A."/>
            <person name="Magee P.T."/>
        </authorList>
    </citation>
    <scope>GENOME REANNOTATION</scope>
    <source>
        <strain>SC5314 / ATCC MYA-2876</strain>
    </source>
</reference>
<reference key="3">
    <citation type="journal article" date="2013" name="Genome Biol.">
        <title>Assembly of a phased diploid Candida albicans genome facilitates allele-specific measurements and provides a simple model for repeat and indel structure.</title>
        <authorList>
            <person name="Muzzey D."/>
            <person name="Schwartz K."/>
            <person name="Weissman J.S."/>
            <person name="Sherlock G."/>
        </authorList>
    </citation>
    <scope>NUCLEOTIDE SEQUENCE [LARGE SCALE GENOMIC DNA]</scope>
    <scope>GENOME REANNOTATION</scope>
    <source>
        <strain>SC5314 / ATCC MYA-2876</strain>
    </source>
</reference>
<reference key="4">
    <citation type="journal article" date="2004" name="Med. Mycol.">
        <title>Isolation, characterization, and regulation of the Candida albicans ERG27 gene encoding the sterol 3-keto reductase.</title>
        <authorList>
            <person name="Pierson C.A."/>
            <person name="Jia N."/>
            <person name="Mo C."/>
            <person name="Lees N.D."/>
            <person name="Sturm A.M."/>
            <person name="Eckstein J."/>
            <person name="Barbuct R."/>
            <person name="Bard M."/>
        </authorList>
    </citation>
    <scope>FUNCTION</scope>
    <scope>CATALYTIC ACTIVITY</scope>
    <scope>DISRUPTION PHENOTYPE</scope>
    <scope>INDUCTION</scope>
    <scope>PATHWAY</scope>
</reference>
<evidence type="ECO:0000250" key="1">
    <source>
        <dbReference type="UniProtKB" id="L0E2Z4"/>
    </source>
</evidence>
<evidence type="ECO:0000250" key="2">
    <source>
        <dbReference type="UniProtKB" id="O93868"/>
    </source>
</evidence>
<evidence type="ECO:0000250" key="3">
    <source>
        <dbReference type="UniProtKB" id="Q12452"/>
    </source>
</evidence>
<evidence type="ECO:0000255" key="4"/>
<evidence type="ECO:0000255" key="5">
    <source>
        <dbReference type="PROSITE-ProRule" id="PRU00498"/>
    </source>
</evidence>
<evidence type="ECO:0000269" key="6">
    <source>
    </source>
</evidence>
<evidence type="ECO:0000303" key="7">
    <source>
    </source>
</evidence>
<evidence type="ECO:0000305" key="8"/>
<accession>Q5A888</accession>
<sequence length="346" mass="38981">MSLLKDSTVAVITGTSSNLGFNIAVRLLEGLPDNKEITLVVTSRTLPKVKEVISDIKKYIVAKIPTKVNKVEFDYLLVDFTDMVSILSAYYELNKRYKHIDYLFINAAQGVYGGIDWTGAVLEVLQSPIEAVTNPTYKLQKVGVESGDKLGLVFQANVFGPYYFIHRIKHLLENGGKIVWVSSLMSSPKYLSFNDLQLLRSPASYEGSKRLVDLMHFGTYNKLEREHGIKQYLVHPGIFTSFSFFQYLNVFTYYGMLFLFYLARFLGSPYHNISGYIAANAPVAAALGQTKQNCKTASACTRSGKEYLLEEEIDSTGSDDVVSYLDTLTKEWDEKLKDQIVNTRQP</sequence>
<proteinExistence type="evidence at protein level"/>
<protein>
    <recommendedName>
        <fullName evidence="7">3-keto-steroid reductase ERG27</fullName>
        <ecNumber evidence="6">1.1.1.270</ecNumber>
    </recommendedName>
</protein>
<organism>
    <name type="scientific">Candida albicans (strain SC5314 / ATCC MYA-2876)</name>
    <name type="common">Yeast</name>
    <dbReference type="NCBI Taxonomy" id="237561"/>
    <lineage>
        <taxon>Eukaryota</taxon>
        <taxon>Fungi</taxon>
        <taxon>Dikarya</taxon>
        <taxon>Ascomycota</taxon>
        <taxon>Saccharomycotina</taxon>
        <taxon>Pichiomycetes</taxon>
        <taxon>Debaryomycetaceae</taxon>
        <taxon>Candida/Lodderomyces clade</taxon>
        <taxon>Candida</taxon>
    </lineage>
</organism>
<gene>
    <name evidence="7" type="primary">ERG27</name>
    <name type="ordered locus">CAALFM_CR01140CA</name>
    <name type="ordered locus">orf19.3240</name>
</gene>
<dbReference type="EC" id="1.1.1.270" evidence="6"/>
<dbReference type="EMBL" id="CP017630">
    <property type="protein sequence ID" value="AOW30876.1"/>
    <property type="molecule type" value="Genomic_DNA"/>
</dbReference>
<dbReference type="RefSeq" id="XP_717931.1">
    <property type="nucleotide sequence ID" value="XM_712838.1"/>
</dbReference>
<dbReference type="SMR" id="Q5A888"/>
<dbReference type="FunCoup" id="Q5A888">
    <property type="interactions" value="150"/>
</dbReference>
<dbReference type="STRING" id="237561.Q5A888"/>
<dbReference type="GlyCosmos" id="Q5A888">
    <property type="glycosylation" value="1 site, No reported glycans"/>
</dbReference>
<dbReference type="EnsemblFungi" id="CR_01140C_A-T">
    <property type="protein sequence ID" value="CR_01140C_A-T-p1"/>
    <property type="gene ID" value="CR_01140C_A"/>
</dbReference>
<dbReference type="GeneID" id="3640432"/>
<dbReference type="KEGG" id="cal:CAALFM_CR01140CA"/>
<dbReference type="CGD" id="CAL0000174882">
    <property type="gene designation" value="ERG27"/>
</dbReference>
<dbReference type="VEuPathDB" id="FungiDB:CR_01140C_A"/>
<dbReference type="eggNOG" id="KOG1478">
    <property type="taxonomic scope" value="Eukaryota"/>
</dbReference>
<dbReference type="HOGENOM" id="CLU_029944_1_0_1"/>
<dbReference type="InParanoid" id="Q5A888"/>
<dbReference type="OMA" id="WHNIDGY"/>
<dbReference type="OrthoDB" id="9989144at2759"/>
<dbReference type="UniPathway" id="UPA00770">
    <property type="reaction ID" value="UER00758"/>
</dbReference>
<dbReference type="Proteomes" id="UP000000559">
    <property type="component" value="Chromosome R"/>
</dbReference>
<dbReference type="GO" id="GO:0005789">
    <property type="term" value="C:endoplasmic reticulum membrane"/>
    <property type="evidence" value="ECO:0000318"/>
    <property type="project" value="GO_Central"/>
</dbReference>
<dbReference type="GO" id="GO:0005811">
    <property type="term" value="C:lipid droplet"/>
    <property type="evidence" value="ECO:0000318"/>
    <property type="project" value="GO_Central"/>
</dbReference>
<dbReference type="GO" id="GO:0000253">
    <property type="term" value="F:3-beta-hydroxysteroid 3-dehydrogenase (NADP+) activity"/>
    <property type="evidence" value="ECO:0000315"/>
    <property type="project" value="CGD"/>
</dbReference>
<dbReference type="GO" id="GO:0006696">
    <property type="term" value="P:ergosterol biosynthetic process"/>
    <property type="evidence" value="ECO:0000316"/>
    <property type="project" value="CGD"/>
</dbReference>
<dbReference type="FunFam" id="3.40.50.720:FF:000525">
    <property type="entry name" value="3-keto-steroid reductase"/>
    <property type="match status" value="1"/>
</dbReference>
<dbReference type="Gene3D" id="3.40.50.720">
    <property type="entry name" value="NAD(P)-binding Rossmann-like Domain"/>
    <property type="match status" value="1"/>
</dbReference>
<dbReference type="InterPro" id="IPR051593">
    <property type="entry name" value="Ergosterol_Biosynth_ERG27"/>
</dbReference>
<dbReference type="InterPro" id="IPR036291">
    <property type="entry name" value="NAD(P)-bd_dom_sf"/>
</dbReference>
<dbReference type="InterPro" id="IPR002347">
    <property type="entry name" value="SDR_fam"/>
</dbReference>
<dbReference type="PANTHER" id="PTHR43647:SF1">
    <property type="entry name" value="3-KETO-STEROID REDUCTASE ERG27"/>
    <property type="match status" value="1"/>
</dbReference>
<dbReference type="PANTHER" id="PTHR43647">
    <property type="entry name" value="DEHYDROGENASE"/>
    <property type="match status" value="1"/>
</dbReference>
<dbReference type="Pfam" id="PF00106">
    <property type="entry name" value="adh_short"/>
    <property type="match status" value="1"/>
</dbReference>
<dbReference type="SUPFAM" id="SSF51735">
    <property type="entry name" value="NAD(P)-binding Rossmann-fold domains"/>
    <property type="match status" value="1"/>
</dbReference>
<keyword id="KW-0256">Endoplasmic reticulum</keyword>
<keyword id="KW-0325">Glycoprotein</keyword>
<keyword id="KW-0444">Lipid biosynthesis</keyword>
<keyword id="KW-0551">Lipid droplet</keyword>
<keyword id="KW-0443">Lipid metabolism</keyword>
<keyword id="KW-0472">Membrane</keyword>
<keyword id="KW-0521">NADP</keyword>
<keyword id="KW-0560">Oxidoreductase</keyword>
<keyword id="KW-1185">Reference proteome</keyword>
<keyword id="KW-0752">Steroid biosynthesis</keyword>
<keyword id="KW-0812">Transmembrane</keyword>
<keyword id="KW-1133">Transmembrane helix</keyword>